<evidence type="ECO:0000250" key="1"/>
<evidence type="ECO:0000250" key="2">
    <source>
        <dbReference type="UniProtKB" id="P62878"/>
    </source>
</evidence>
<evidence type="ECO:0000255" key="3">
    <source>
        <dbReference type="PROSITE-ProRule" id="PRU00175"/>
    </source>
</evidence>
<evidence type="ECO:0000269" key="4">
    <source>
    </source>
</evidence>
<evidence type="ECO:0000269" key="5">
    <source>
    </source>
</evidence>
<evidence type="ECO:0000269" key="6">
    <source>
    </source>
</evidence>
<evidence type="ECO:0000269" key="7">
    <source>
    </source>
</evidence>
<evidence type="ECO:0000305" key="8"/>
<evidence type="ECO:0007744" key="9">
    <source>
    </source>
</evidence>
<name>RBX1A_ARATH</name>
<feature type="initiator methionine" description="Removed" evidence="9">
    <location>
        <position position="1"/>
    </location>
</feature>
<feature type="chain" id="PRO_0000056019" description="RING-box protein 1a">
    <location>
        <begin position="2"/>
        <end position="118"/>
    </location>
</feature>
<feature type="zinc finger region" description="RING-type" evidence="3">
    <location>
        <begin position="63"/>
        <end position="108"/>
    </location>
</feature>
<feature type="binding site" evidence="2">
    <location>
        <position position="52"/>
    </location>
    <ligand>
        <name>Zn(2+)</name>
        <dbReference type="ChEBI" id="CHEBI:29105"/>
        <label>1</label>
    </ligand>
</feature>
<feature type="binding site" evidence="2">
    <location>
        <position position="55"/>
    </location>
    <ligand>
        <name>Zn(2+)</name>
        <dbReference type="ChEBI" id="CHEBI:29105"/>
        <label>1</label>
    </ligand>
</feature>
<feature type="binding site" evidence="2">
    <location>
        <position position="63"/>
    </location>
    <ligand>
        <name>Zn(2+)</name>
        <dbReference type="ChEBI" id="CHEBI:29105"/>
        <label>2</label>
    </ligand>
</feature>
<feature type="binding site" evidence="2">
    <location>
        <position position="66"/>
    </location>
    <ligand>
        <name>Zn(2+)</name>
        <dbReference type="ChEBI" id="CHEBI:29105"/>
        <label>2</label>
    </ligand>
</feature>
<feature type="binding site" evidence="2">
    <location>
        <position position="78"/>
    </location>
    <ligand>
        <name>Zn(2+)</name>
        <dbReference type="ChEBI" id="CHEBI:29105"/>
        <label>2</label>
    </ligand>
</feature>
<feature type="binding site" evidence="2">
    <location>
        <position position="85"/>
    </location>
    <ligand>
        <name>Zn(2+)</name>
        <dbReference type="ChEBI" id="CHEBI:29105"/>
        <label>3</label>
    </ligand>
</feature>
<feature type="binding site" evidence="2">
    <location>
        <position position="87"/>
    </location>
    <ligand>
        <name>Zn(2+)</name>
        <dbReference type="ChEBI" id="CHEBI:29105"/>
        <label>3</label>
    </ligand>
</feature>
<feature type="binding site" evidence="2">
    <location>
        <position position="90"/>
    </location>
    <ligand>
        <name>Zn(2+)</name>
        <dbReference type="ChEBI" id="CHEBI:29105"/>
        <label>1</label>
    </ligand>
</feature>
<feature type="binding site" evidence="2">
    <location>
        <position position="92"/>
    </location>
    <ligand>
        <name>Zn(2+)</name>
        <dbReference type="ChEBI" id="CHEBI:29105"/>
        <label>2</label>
    </ligand>
</feature>
<feature type="binding site" evidence="2">
    <location>
        <position position="104"/>
    </location>
    <ligand>
        <name>Zn(2+)</name>
        <dbReference type="ChEBI" id="CHEBI:29105"/>
        <label>3</label>
    </ligand>
</feature>
<feature type="binding site" evidence="2">
    <location>
        <position position="107"/>
    </location>
    <ligand>
        <name>Zn(2+)</name>
        <dbReference type="ChEBI" id="CHEBI:29105"/>
        <label>3</label>
    </ligand>
</feature>
<feature type="modified residue" description="N-acetylalanine" evidence="9">
    <location>
        <position position="2"/>
    </location>
</feature>
<organism>
    <name type="scientific">Arabidopsis thaliana</name>
    <name type="common">Mouse-ear cress</name>
    <dbReference type="NCBI Taxonomy" id="3702"/>
    <lineage>
        <taxon>Eukaryota</taxon>
        <taxon>Viridiplantae</taxon>
        <taxon>Streptophyta</taxon>
        <taxon>Embryophyta</taxon>
        <taxon>Tracheophyta</taxon>
        <taxon>Spermatophyta</taxon>
        <taxon>Magnoliopsida</taxon>
        <taxon>eudicotyledons</taxon>
        <taxon>Gunneridae</taxon>
        <taxon>Pentapetalae</taxon>
        <taxon>rosids</taxon>
        <taxon>malvids</taxon>
        <taxon>Brassicales</taxon>
        <taxon>Brassicaceae</taxon>
        <taxon>Camelineae</taxon>
        <taxon>Arabidopsis</taxon>
    </lineage>
</organism>
<accession>Q940X7</accession>
<proteinExistence type="evidence at protein level"/>
<comment type="function">
    <text evidence="4 5 6">Component of the SCF (SKP1-CUL1-F-box protein) E3 ubiquitin ligase complex, which mediates the ubiquitination and subsequent proteasomal degradation of target proteins. The SCF complex plays a crucial role in regulating response to auxin and is essential for growth and development. Through the RING-type zinc finger, seems to recruit the E2 ubiquitination enzyme, to the complex and brings it into close proximity to the substrate. Promotes the neddylation of CUL1.</text>
</comment>
<comment type="pathway">
    <text>Protein modification; protein ubiquitination.</text>
</comment>
<comment type="subunit">
    <text evidence="4 5 7">Part of SCF complexes, which consist of a SKP1-related protein, a cullin, a RBX protein and a F-box protein. Part of a SCF complex with ASK1 or ASK2 and CUL1. Part of a SCF complex with CUL1 and TIR1. Interacts with CUL1 and CUL4. Component of the CUL4-RBX1-CDD complex.</text>
</comment>
<comment type="interaction">
    <interactant intactId="EBI-532404">
        <id>Q940X7</id>
    </interactant>
    <interactant intactId="EBI-532411">
        <id>Q94AH6</id>
        <label>CUL1</label>
    </interactant>
    <organismsDiffer>false</organismsDiffer>
    <experiments>6</experiments>
</comment>
<comment type="interaction">
    <interactant intactId="EBI-532404">
        <id>Q940X7</id>
    </interactant>
    <interactant intactId="EBI-531362">
        <id>Q9ZVH4</id>
        <label>CUL3A</label>
    </interactant>
    <organismsDiffer>false</organismsDiffer>
    <experiments>4</experiments>
</comment>
<comment type="interaction">
    <interactant intactId="EBI-532404">
        <id>Q940X7</id>
    </interactant>
    <interactant intactId="EBI-541687">
        <id>Q9C9L0</id>
        <label>CUL3B</label>
    </interactant>
    <organismsDiffer>false</organismsDiffer>
    <experiments>3</experiments>
</comment>
<comment type="interaction">
    <interactant intactId="EBI-532404">
        <id>Q940X7</id>
    </interactant>
    <interactant intactId="EBI-541750">
        <id>Q8LGH4</id>
        <label>CUL4</label>
    </interactant>
    <organismsDiffer>false</organismsDiffer>
    <experiments>3</experiments>
</comment>
<comment type="interaction">
    <interactant intactId="EBI-532404">
        <id>Q940X7</id>
    </interactant>
    <interactant intactId="EBI-595116">
        <id>Q9SDY5</id>
        <label>RCE1</label>
    </interactant>
    <organismsDiffer>false</organismsDiffer>
    <experiments>2</experiments>
</comment>
<comment type="subcellular location">
    <subcellularLocation>
        <location evidence="1">Cytoplasm</location>
    </subcellularLocation>
    <subcellularLocation>
        <location evidence="1">Nucleus</location>
    </subcellularLocation>
</comment>
<comment type="alternative products">
    <event type="alternative splicing"/>
    <isoform>
        <id>Q940X7-1</id>
        <name>1</name>
        <sequence type="displayed"/>
    </isoform>
    <text>A number of isoforms are produced. According to EST sequences.</text>
</comment>
<comment type="tissue specificity">
    <text evidence="4 5">Widely expressed. Expressed in shoot, siliques, meristem, flowers, floral buds, open flowers, leaves, stems, roots, germinal seeds and seedlings in dark. Expressed at a higher level in tissues containing actively dividing cells.</text>
</comment>
<comment type="domain">
    <text>The RING-type zinc finger domain is essential for ubiquitin ligase activity. It coordinates an additional third zinc ion.</text>
</comment>
<comment type="similarity">
    <text evidence="8">Belongs to the RING-box family.</text>
</comment>
<protein>
    <recommendedName>
        <fullName>RING-box protein 1a</fullName>
    </recommendedName>
    <alternativeName>
        <fullName>At-Rbx1;1</fullName>
    </alternativeName>
    <alternativeName>
        <fullName>Protein RING of cullins 1</fullName>
    </alternativeName>
    <alternativeName>
        <fullName>RBX1-2</fullName>
    </alternativeName>
    <alternativeName>
        <fullName>RBX1a-At</fullName>
    </alternativeName>
</protein>
<keyword id="KW-0007">Acetylation</keyword>
<keyword id="KW-0025">Alternative splicing</keyword>
<keyword id="KW-0963">Cytoplasm</keyword>
<keyword id="KW-0479">Metal-binding</keyword>
<keyword id="KW-0539">Nucleus</keyword>
<keyword id="KW-1185">Reference proteome</keyword>
<keyword id="KW-0833">Ubl conjugation pathway</keyword>
<keyword id="KW-0862">Zinc</keyword>
<keyword id="KW-0863">Zinc-finger</keyword>
<reference key="1">
    <citation type="submission" date="2001-08" db="EMBL/GenBank/DDBJ databases">
        <authorList>
            <person name="Oekresz L."/>
        </authorList>
    </citation>
    <scope>NUCLEOTIDE SEQUENCE [MRNA]</scope>
</reference>
<reference key="2">
    <citation type="journal article" date="2000" name="Nature">
        <title>Sequence and analysis of chromosome 5 of the plant Arabidopsis thaliana.</title>
        <authorList>
            <person name="Tabata S."/>
            <person name="Kaneko T."/>
            <person name="Nakamura Y."/>
            <person name="Kotani H."/>
            <person name="Kato T."/>
            <person name="Asamizu E."/>
            <person name="Miyajima N."/>
            <person name="Sasamoto S."/>
            <person name="Kimura T."/>
            <person name="Hosouchi T."/>
            <person name="Kawashima K."/>
            <person name="Kohara M."/>
            <person name="Matsumoto M."/>
            <person name="Matsuno A."/>
            <person name="Muraki A."/>
            <person name="Nakayama S."/>
            <person name="Nakazaki N."/>
            <person name="Naruo K."/>
            <person name="Okumura S."/>
            <person name="Shinpo S."/>
            <person name="Takeuchi C."/>
            <person name="Wada T."/>
            <person name="Watanabe A."/>
            <person name="Yamada M."/>
            <person name="Yasuda M."/>
            <person name="Sato S."/>
            <person name="de la Bastide M."/>
            <person name="Huang E."/>
            <person name="Spiegel L."/>
            <person name="Gnoj L."/>
            <person name="O'Shaughnessy A."/>
            <person name="Preston R."/>
            <person name="Habermann K."/>
            <person name="Murray J."/>
            <person name="Johnson D."/>
            <person name="Rohlfing T."/>
            <person name="Nelson J."/>
            <person name="Stoneking T."/>
            <person name="Pepin K."/>
            <person name="Spieth J."/>
            <person name="Sekhon M."/>
            <person name="Armstrong J."/>
            <person name="Becker M."/>
            <person name="Belter E."/>
            <person name="Cordum H."/>
            <person name="Cordes M."/>
            <person name="Courtney L."/>
            <person name="Courtney W."/>
            <person name="Dante M."/>
            <person name="Du H."/>
            <person name="Edwards J."/>
            <person name="Fryman J."/>
            <person name="Haakensen B."/>
            <person name="Lamar E."/>
            <person name="Latreille P."/>
            <person name="Leonard S."/>
            <person name="Meyer R."/>
            <person name="Mulvaney E."/>
            <person name="Ozersky P."/>
            <person name="Riley A."/>
            <person name="Strowmatt C."/>
            <person name="Wagner-McPherson C."/>
            <person name="Wollam A."/>
            <person name="Yoakum M."/>
            <person name="Bell M."/>
            <person name="Dedhia N."/>
            <person name="Parnell L."/>
            <person name="Shah R."/>
            <person name="Rodriguez M."/>
            <person name="Hoon See L."/>
            <person name="Vil D."/>
            <person name="Baker J."/>
            <person name="Kirchoff K."/>
            <person name="Toth K."/>
            <person name="King L."/>
            <person name="Bahret A."/>
            <person name="Miller B."/>
            <person name="Marra M.A."/>
            <person name="Martienssen R."/>
            <person name="McCombie W.R."/>
            <person name="Wilson R.K."/>
            <person name="Murphy G."/>
            <person name="Bancroft I."/>
            <person name="Volckaert G."/>
            <person name="Wambutt R."/>
            <person name="Duesterhoeft A."/>
            <person name="Stiekema W."/>
            <person name="Pohl T."/>
            <person name="Entian K.-D."/>
            <person name="Terryn N."/>
            <person name="Hartley N."/>
            <person name="Bent E."/>
            <person name="Johnson S."/>
            <person name="Langham S.-A."/>
            <person name="McCullagh B."/>
            <person name="Robben J."/>
            <person name="Grymonprez B."/>
            <person name="Zimmermann W."/>
            <person name="Ramsperger U."/>
            <person name="Wedler H."/>
            <person name="Balke K."/>
            <person name="Wedler E."/>
            <person name="Peters S."/>
            <person name="van Staveren M."/>
            <person name="Dirkse W."/>
            <person name="Mooijman P."/>
            <person name="Klein Lankhorst R."/>
            <person name="Weitzenegger T."/>
            <person name="Bothe G."/>
            <person name="Rose M."/>
            <person name="Hauf J."/>
            <person name="Berneiser S."/>
            <person name="Hempel S."/>
            <person name="Feldpausch M."/>
            <person name="Lamberth S."/>
            <person name="Villarroel R."/>
            <person name="Gielen J."/>
            <person name="Ardiles W."/>
            <person name="Bents O."/>
            <person name="Lemcke K."/>
            <person name="Kolesov G."/>
            <person name="Mayer K.F.X."/>
            <person name="Rudd S."/>
            <person name="Schoof H."/>
            <person name="Schueller C."/>
            <person name="Zaccaria P."/>
            <person name="Mewes H.-W."/>
            <person name="Bevan M."/>
            <person name="Fransz P.F."/>
        </authorList>
    </citation>
    <scope>NUCLEOTIDE SEQUENCE [LARGE SCALE GENOMIC DNA]</scope>
    <source>
        <strain>cv. Columbia</strain>
    </source>
</reference>
<reference key="3">
    <citation type="journal article" date="2017" name="Plant J.">
        <title>Araport11: a complete reannotation of the Arabidopsis thaliana reference genome.</title>
        <authorList>
            <person name="Cheng C.Y."/>
            <person name="Krishnakumar V."/>
            <person name="Chan A.P."/>
            <person name="Thibaud-Nissen F."/>
            <person name="Schobel S."/>
            <person name="Town C.D."/>
        </authorList>
    </citation>
    <scope>GENOME REANNOTATION</scope>
    <source>
        <strain>cv. Columbia</strain>
    </source>
</reference>
<reference key="4">
    <citation type="journal article" date="2002" name="Science">
        <title>Functional annotation of a full-length Arabidopsis cDNA collection.</title>
        <authorList>
            <person name="Seki M."/>
            <person name="Narusaka M."/>
            <person name="Kamiya A."/>
            <person name="Ishida J."/>
            <person name="Satou M."/>
            <person name="Sakurai T."/>
            <person name="Nakajima M."/>
            <person name="Enju A."/>
            <person name="Akiyama K."/>
            <person name="Oono Y."/>
            <person name="Muramatsu M."/>
            <person name="Hayashizaki Y."/>
            <person name="Kawai J."/>
            <person name="Carninci P."/>
            <person name="Itoh M."/>
            <person name="Ishii Y."/>
            <person name="Arakawa T."/>
            <person name="Shibata K."/>
            <person name="Shinagawa A."/>
            <person name="Shinozaki K."/>
        </authorList>
    </citation>
    <scope>NUCLEOTIDE SEQUENCE [LARGE SCALE MRNA]</scope>
    <source>
        <strain>cv. Columbia</strain>
    </source>
</reference>
<reference key="5">
    <citation type="journal article" date="2003" name="Science">
        <title>Empirical analysis of transcriptional activity in the Arabidopsis genome.</title>
        <authorList>
            <person name="Yamada K."/>
            <person name="Lim J."/>
            <person name="Dale J.M."/>
            <person name="Chen H."/>
            <person name="Shinn P."/>
            <person name="Palm C.J."/>
            <person name="Southwick A.M."/>
            <person name="Wu H.C."/>
            <person name="Kim C.J."/>
            <person name="Nguyen M."/>
            <person name="Pham P.K."/>
            <person name="Cheuk R.F."/>
            <person name="Karlin-Newmann G."/>
            <person name="Liu S.X."/>
            <person name="Lam B."/>
            <person name="Sakano H."/>
            <person name="Wu T."/>
            <person name="Yu G."/>
            <person name="Miranda M."/>
            <person name="Quach H.L."/>
            <person name="Tripp M."/>
            <person name="Chang C.H."/>
            <person name="Lee J.M."/>
            <person name="Toriumi M.J."/>
            <person name="Chan M.M."/>
            <person name="Tang C.C."/>
            <person name="Onodera C.S."/>
            <person name="Deng J.M."/>
            <person name="Akiyama K."/>
            <person name="Ansari Y."/>
            <person name="Arakawa T."/>
            <person name="Banh J."/>
            <person name="Banno F."/>
            <person name="Bowser L."/>
            <person name="Brooks S.Y."/>
            <person name="Carninci P."/>
            <person name="Chao Q."/>
            <person name="Choy N."/>
            <person name="Enju A."/>
            <person name="Goldsmith A.D."/>
            <person name="Gurjal M."/>
            <person name="Hansen N.F."/>
            <person name="Hayashizaki Y."/>
            <person name="Johnson-Hopson C."/>
            <person name="Hsuan V.W."/>
            <person name="Iida K."/>
            <person name="Karnes M."/>
            <person name="Khan S."/>
            <person name="Koesema E."/>
            <person name="Ishida J."/>
            <person name="Jiang P.X."/>
            <person name="Jones T."/>
            <person name="Kawai J."/>
            <person name="Kamiya A."/>
            <person name="Meyers C."/>
            <person name="Nakajima M."/>
            <person name="Narusaka M."/>
            <person name="Seki M."/>
            <person name="Sakurai T."/>
            <person name="Satou M."/>
            <person name="Tamse R."/>
            <person name="Vaysberg M."/>
            <person name="Wallender E.K."/>
            <person name="Wong C."/>
            <person name="Yamamura Y."/>
            <person name="Yuan S."/>
            <person name="Shinozaki K."/>
            <person name="Davis R.W."/>
            <person name="Theologis A."/>
            <person name="Ecker J.R."/>
        </authorList>
    </citation>
    <scope>NUCLEOTIDE SEQUENCE [LARGE SCALE MRNA]</scope>
    <source>
        <strain>cv. Columbia</strain>
    </source>
</reference>
<reference key="6">
    <citation type="submission" date="2002-03" db="EMBL/GenBank/DDBJ databases">
        <title>Full-length cDNA from Arabidopsis thaliana.</title>
        <authorList>
            <person name="Brover V.V."/>
            <person name="Troukhan M.E."/>
            <person name="Alexandrov N.A."/>
            <person name="Lu Y.-P."/>
            <person name="Flavell R.B."/>
            <person name="Feldmann K.A."/>
        </authorList>
    </citation>
    <scope>NUCLEOTIDE SEQUENCE [LARGE SCALE MRNA]</scope>
</reference>
<reference key="7">
    <citation type="journal article" date="2002" name="Plant Cell">
        <title>Role of the Arabidopsis RING-H2 protein RBX1 in RUB modification and SCF function.</title>
        <authorList>
            <person name="Gray W.M."/>
            <person name="Hellmann H."/>
            <person name="Dharmasiri S."/>
            <person name="Estelle M."/>
        </authorList>
    </citation>
    <scope>FUNCTION</scope>
    <scope>TISSUE SPECIFICITY</scope>
    <scope>IDENTIFICATION IN A SCF COMPLEX WITH CUL1 AND TIR1</scope>
    <scope>INTERACTION WITH CUL1</scope>
</reference>
<reference key="8">
    <citation type="journal article" date="2002" name="J. Biol. Chem.">
        <title>The AtRbx1 protein is part of plant SCF complexes, and its down-regulation causes severe growth and developmental defects.</title>
        <authorList>
            <person name="Lechner E."/>
            <person name="Xie D."/>
            <person name="Grava S."/>
            <person name="Pigaglio E."/>
            <person name="Planchais S."/>
            <person name="Murray J.A.H."/>
            <person name="Parmentier Y."/>
            <person name="Mutterer J."/>
            <person name="Dubreucq B."/>
            <person name="Shen W.-H."/>
            <person name="Genschik P."/>
        </authorList>
    </citation>
    <scope>FUNCTION</scope>
    <scope>TISSUE SPECIFICITY</scope>
    <scope>IDENTIFICATION IN SCF COMPLEX</scope>
    <scope>INTERACTION WITH CUL1; CUL4; ASK1 AND ASK2</scope>
</reference>
<reference key="9">
    <citation type="journal article" date="2003" name="EMBO J.">
        <title>The RUB/Nedd8 conjugation pathway is required for early development in Arabidopsis.</title>
        <authorList>
            <person name="Dharmasiri S."/>
            <person name="Dharmasiri N."/>
            <person name="Hellmann H."/>
            <person name="Estelle M."/>
        </authorList>
    </citation>
    <scope>FUNCTION</scope>
</reference>
<reference key="10">
    <citation type="journal article" date="2006" name="Plant Cell">
        <title>Arabidopsis CULLIN4 forms an E3 ubiquitin ligase with RBX1 and the CDD complex in mediating light control of development.</title>
        <authorList>
            <person name="Chen H."/>
            <person name="Shen Y."/>
            <person name="Tang X."/>
            <person name="Yu L."/>
            <person name="Wang J."/>
            <person name="Guo L."/>
            <person name="Zhang Y."/>
            <person name="Zhang H."/>
            <person name="Feng S."/>
            <person name="Strickland E."/>
            <person name="Zheng N."/>
            <person name="Deng X.-W."/>
        </authorList>
    </citation>
    <scope>IDENTIFICATION IN THE CUL4-RBX1-CDD E3 LIGASE COMPLEX</scope>
</reference>
<reference key="11">
    <citation type="journal article" date="2012" name="Mol. Cell. Proteomics">
        <title>Comparative large-scale characterisation of plant vs. mammal proteins reveals similar and idiosyncratic N-alpha acetylation features.</title>
        <authorList>
            <person name="Bienvenut W.V."/>
            <person name="Sumpton D."/>
            <person name="Martinez A."/>
            <person name="Lilla S."/>
            <person name="Espagne C."/>
            <person name="Meinnel T."/>
            <person name="Giglione C."/>
        </authorList>
    </citation>
    <scope>ACETYLATION [LARGE SCALE ANALYSIS] AT ALA-2</scope>
    <scope>CLEAVAGE OF INITIATOR METHIONINE [LARGE SCALE ANALYSIS]</scope>
    <scope>IDENTIFICATION BY MASS SPECTROMETRY [LARGE SCALE ANALYSIS]</scope>
</reference>
<dbReference type="EMBL" id="AY052401">
    <property type="protein sequence ID" value="AAL13435.1"/>
    <property type="molecule type" value="mRNA"/>
</dbReference>
<dbReference type="EMBL" id="AF296833">
    <property type="status" value="NOT_ANNOTATED_CDS"/>
    <property type="molecule type" value="Genomic_DNA"/>
</dbReference>
<dbReference type="EMBL" id="CP002688">
    <property type="protein sequence ID" value="AED92859.1"/>
    <property type="molecule type" value="Genomic_DNA"/>
</dbReference>
<dbReference type="EMBL" id="AK118181">
    <property type="protein sequence ID" value="BAC42804.1"/>
    <property type="molecule type" value="mRNA"/>
</dbReference>
<dbReference type="EMBL" id="AY072430">
    <property type="protein sequence ID" value="AAL62422.1"/>
    <property type="molecule type" value="mRNA"/>
</dbReference>
<dbReference type="EMBL" id="AY114719">
    <property type="protein sequence ID" value="AAM48038.1"/>
    <property type="molecule type" value="mRNA"/>
</dbReference>
<dbReference type="EMBL" id="AY086913">
    <property type="protein sequence ID" value="AAM64477.1"/>
    <property type="molecule type" value="mRNA"/>
</dbReference>
<dbReference type="RefSeq" id="NP_568396.1">
    <molecule id="Q940X7-1"/>
    <property type="nucleotide sequence ID" value="NM_122064.3"/>
</dbReference>
<dbReference type="SMR" id="Q940X7"/>
<dbReference type="BioGRID" id="17454">
    <property type="interactions" value="12"/>
</dbReference>
<dbReference type="ComplexPortal" id="CPX-1339">
    <property type="entry name" value="SCF(COI1) ubiquitin ligase complex, variant CUL1-RBX1A-SKP1A"/>
</dbReference>
<dbReference type="ComplexPortal" id="CPX-1343">
    <property type="entry name" value="SCF(TIR1) ubiquitin ligase complex, variant CUL1-RBX1A-SKP1A"/>
</dbReference>
<dbReference type="ComplexPortal" id="CPX-1429">
    <property type="entry name" value="SCF(COI1) ubiquitin ligase complex, variant CUL1-RBX1A-SKP1B"/>
</dbReference>
<dbReference type="ComplexPortal" id="CPX-1430">
    <property type="entry name" value="SCF(COI1) ubiquitin ligase complex, variant CUL1-RBX1A-ASK3"/>
</dbReference>
<dbReference type="ComplexPortal" id="CPX-1431">
    <property type="entry name" value="SCF(COI1) ubiquitin ligase complex, variant CUL1-RBX1A-ASK4"/>
</dbReference>
<dbReference type="ComplexPortal" id="CPX-1432">
    <property type="entry name" value="SCF(COI1) ubiquitin ligase complex, variant CUL1-RBX1A-ASK5"/>
</dbReference>
<dbReference type="ComplexPortal" id="CPX-1433">
    <property type="entry name" value="SCF(COI1) ubiquitin ligase complex, variant CUL1-RBX1A-ASK6"/>
</dbReference>
<dbReference type="ComplexPortal" id="CPX-1434">
    <property type="entry name" value="SCF(COI1) ubiquitin ligase complex, variant CUL1-RBX1A-ASK7"/>
</dbReference>
<dbReference type="ComplexPortal" id="CPX-1435">
    <property type="entry name" value="SCF(COI1) ubiquitin ligase complex, variant CUL1-RBX1A-ASK8"/>
</dbReference>
<dbReference type="ComplexPortal" id="CPX-1436">
    <property type="entry name" value="SCF(COI1) ubiquitin ligase complex, variant CUL1-RBX1A-ASK9"/>
</dbReference>
<dbReference type="ComplexPortal" id="CPX-1437">
    <property type="entry name" value="SCF(COI1) ubiquitin ligase complex, variant CUL1-RBX1A-ASK10"/>
</dbReference>
<dbReference type="ComplexPortal" id="CPX-1438">
    <property type="entry name" value="SCF(COI1) ubiquitin ligase complex, variant CUL1-RBX1A-ASK11"/>
</dbReference>
<dbReference type="ComplexPortal" id="CPX-1439">
    <property type="entry name" value="SCF(COI1) ubiquitin ligase complex, variant CUL1-RBX1A-ASK12"/>
</dbReference>
<dbReference type="ComplexPortal" id="CPX-1440">
    <property type="entry name" value="SCF(COI1) ubiquitin ligase complex, variant CUL1-RBX1A-ASK13"/>
</dbReference>
<dbReference type="ComplexPortal" id="CPX-1441">
    <property type="entry name" value="SCF(COI1) ubiquitin ligase complex, variant CUL1-RBX1A-ASK14"/>
</dbReference>
<dbReference type="ComplexPortal" id="CPX-1442">
    <property type="entry name" value="SCF(COI1) ubiquitin ligase complex, variant CUL1-RBX1A-ASK15"/>
</dbReference>
<dbReference type="ComplexPortal" id="CPX-1443">
    <property type="entry name" value="SCF(COI1) ubiquitin ligase complex, variant CUL1-RBX1A-ASK16"/>
</dbReference>
<dbReference type="ComplexPortal" id="CPX-1444">
    <property type="entry name" value="SCF(COI1) ubiquitin ligase complex, variant CUL1-RBX1A-ASK17"/>
</dbReference>
<dbReference type="ComplexPortal" id="CPX-1445">
    <property type="entry name" value="SCF(COI1) ubiquitin ligase complex, variant CUL1-RBX1A-ASK18"/>
</dbReference>
<dbReference type="ComplexPortal" id="CPX-1446">
    <property type="entry name" value="SCF(COI1) ubiquitin ligase complex, variant CUL1-RBX1A-ASK19"/>
</dbReference>
<dbReference type="ComplexPortal" id="CPX-1447">
    <property type="entry name" value="SCF(COI1) ubiquitin ligase complex, variant CUL1-RBX1A-ASK20"/>
</dbReference>
<dbReference type="ComplexPortal" id="CPX-1448">
    <property type="entry name" value="SCF(COI1) ubiquitin ligase complex, variant CUL1-RBX1A-ASK21"/>
</dbReference>
<dbReference type="ComplexPortal" id="CPX-1471">
    <property type="entry name" value="SCF(COI1) ubiquitin ligase complex, variant CUL2-RBX1A-SKP1A"/>
</dbReference>
<dbReference type="ComplexPortal" id="CPX-1472">
    <property type="entry name" value="SCF(COI1) ubiquitin ligase complex, variant CUL2-RBX1A-SKP1B"/>
</dbReference>
<dbReference type="ComplexPortal" id="CPX-1473">
    <property type="entry name" value="SCF(COI1) ubiquitin ligase complex, variant CUL2-RBX1A-ASK3"/>
</dbReference>
<dbReference type="ComplexPortal" id="CPX-1474">
    <property type="entry name" value="SCF(COI1) ubiquitin ligase complex, variant CUL2-RBX1A-ASK4"/>
</dbReference>
<dbReference type="ComplexPortal" id="CPX-1475">
    <property type="entry name" value="SCF(COI1) ubiquitin ligase complex, variant CUL2-RBX1A-ASK5"/>
</dbReference>
<dbReference type="ComplexPortal" id="CPX-1476">
    <property type="entry name" value="SCF(COI1) ubiquitin ligase complex, variant CUL2-RBX1A-ASK6"/>
</dbReference>
<dbReference type="ComplexPortal" id="CPX-1477">
    <property type="entry name" value="SCF(COI1) ubiquitin ligase complex, variant CUL2-RBX1A-ASK7"/>
</dbReference>
<dbReference type="ComplexPortal" id="CPX-1478">
    <property type="entry name" value="SCF(COI1) ubiquitin ligase complex, variant CUL2-RBX1A-ASK8"/>
</dbReference>
<dbReference type="ComplexPortal" id="CPX-1479">
    <property type="entry name" value="SCF(COI1) ubiquitin ligase complex, variant CUL2-RBX1A-ASK9"/>
</dbReference>
<dbReference type="ComplexPortal" id="CPX-1480">
    <property type="entry name" value="SCF(COI1) ubiquitin ligase complex, variant CUL2-RBX1A-ASK10"/>
</dbReference>
<dbReference type="ComplexPortal" id="CPX-1481">
    <property type="entry name" value="SCF(COI1) ubiquitin ligase complex, variant CUL2-RBX1A-ASK11"/>
</dbReference>
<dbReference type="ComplexPortal" id="CPX-1482">
    <property type="entry name" value="SCF(COI1) ubiquitin ligase complex, variant CUL2-RBX1A-ASK12"/>
</dbReference>
<dbReference type="ComplexPortal" id="CPX-1483">
    <property type="entry name" value="SCF(COI1) ubiquitin ligase complex, variant CUL2-RBX1A-ASK13"/>
</dbReference>
<dbReference type="ComplexPortal" id="CPX-1484">
    <property type="entry name" value="SCF(COI1) ubiquitin ligase complex, variant CUL2-RBX1A-ASK14"/>
</dbReference>
<dbReference type="ComplexPortal" id="CPX-1485">
    <property type="entry name" value="SCF(COI1) ubiquitin ligase complex, variant CUL2-RBX1A-ASK15"/>
</dbReference>
<dbReference type="ComplexPortal" id="CPX-1486">
    <property type="entry name" value="SCF(COI1) ubiquitin ligase complex, variant CUL2-RBX1A-ASK16"/>
</dbReference>
<dbReference type="ComplexPortal" id="CPX-1487">
    <property type="entry name" value="SCF(COI1) ubiquitin ligase complex, variant CUL2-RBX1A-ASK17"/>
</dbReference>
<dbReference type="ComplexPortal" id="CPX-1488">
    <property type="entry name" value="SCF(COI1) ubiquitin ligase complex, variant CUL2-RBX1A-ASK18"/>
</dbReference>
<dbReference type="ComplexPortal" id="CPX-1489">
    <property type="entry name" value="SCF(COI1) ubiquitin ligase complex, variant CUL2-RBX1A-ASK19"/>
</dbReference>
<dbReference type="ComplexPortal" id="CPX-1490">
    <property type="entry name" value="SCF(COI1) ubiquitin ligase complex, variant CUL2-RBX1A-ASK20"/>
</dbReference>
<dbReference type="ComplexPortal" id="CPX-1491">
    <property type="entry name" value="SCF(COI1) ubiquitin ligase complex, variant CUL2-RBX1A-ASK21"/>
</dbReference>
<dbReference type="ComplexPortal" id="CPX-1515">
    <property type="entry name" value="SCF(TIR1) ubiquitin ligase complex, variant CUL1-RBX1A-SKP1B"/>
</dbReference>
<dbReference type="ComplexPortal" id="CPX-1516">
    <property type="entry name" value="SCF(TIR1) ubiquitin ligase complex, variant CUL1-RBX1A-ASK3"/>
</dbReference>
<dbReference type="ComplexPortal" id="CPX-1517">
    <property type="entry name" value="SCF(TIR1) ubiquitin ligase complex, variant CUL1-RBX1A-ASK4"/>
</dbReference>
<dbReference type="ComplexPortal" id="CPX-1518">
    <property type="entry name" value="SCF(TIR1) ubiquitin ligase complex, variant CUL1-RBX1A-ASK5"/>
</dbReference>
<dbReference type="ComplexPortal" id="CPX-1519">
    <property type="entry name" value="SCF(TIR1) ubiquitin ligase complex, variant CUL1-RBX1A-ASK6"/>
</dbReference>
<dbReference type="ComplexPortal" id="CPX-1520">
    <property type="entry name" value="SCF(TIR1) ubiquitin ligase complex, variant CUL1-RBX1A-ASK7"/>
</dbReference>
<dbReference type="ComplexPortal" id="CPX-1521">
    <property type="entry name" value="SCF(TIR1) ubiquitin ligase complex, variant CUL1-RBX1A-ASK8"/>
</dbReference>
<dbReference type="ComplexPortal" id="CPX-1522">
    <property type="entry name" value="SCF(TIR1) ubiquitin ligase complex, variant CUL1-RBX1A-ASK9"/>
</dbReference>
<dbReference type="ComplexPortal" id="CPX-1523">
    <property type="entry name" value="SCF(TIR1) ubiquitin ligase complex, variant CUL1-RBX1A-ASK10"/>
</dbReference>
<dbReference type="ComplexPortal" id="CPX-1524">
    <property type="entry name" value="SCF(TIR1) ubiquitin ligase complex, variant CUL1-RBX1A-ASK11"/>
</dbReference>
<dbReference type="ComplexPortal" id="CPX-1525">
    <property type="entry name" value="SCF(TIR1) ubiquitin ligase complex, variant CUL1-RBX1A-ASK12"/>
</dbReference>
<dbReference type="ComplexPortal" id="CPX-1526">
    <property type="entry name" value="SCF(TIR1) ubiquitin ligase complex, variant CUL1-RBX1A-ASK13"/>
</dbReference>
<dbReference type="ComplexPortal" id="CPX-1527">
    <property type="entry name" value="SCF(TIR1) ubiquitin ligase complex, variant CUL1-RBX1A-ASK14"/>
</dbReference>
<dbReference type="ComplexPortal" id="CPX-1528">
    <property type="entry name" value="SCF(TIR1) ubiquitin ligase complex, variant CUL1-RBX1A-ASK15"/>
</dbReference>
<dbReference type="ComplexPortal" id="CPX-1529">
    <property type="entry name" value="SCF(TIR1) ubiquitin ligase complex, variant CUL1-RBX1A-ASK16"/>
</dbReference>
<dbReference type="ComplexPortal" id="CPX-1530">
    <property type="entry name" value="SCF(TIR1) ubiquitin ligase complex, variant CUL1-RBX1A-ASK17"/>
</dbReference>
<dbReference type="ComplexPortal" id="CPX-1531">
    <property type="entry name" value="SCF(TIR1) ubiquitin ligase complex, variant CUL1-RBX1A-ASK18"/>
</dbReference>
<dbReference type="ComplexPortal" id="CPX-1532">
    <property type="entry name" value="SCF(TIR1) ubiquitin ligase complex, variant CUL1-RBX1A-ASK19"/>
</dbReference>
<dbReference type="ComplexPortal" id="CPX-1533">
    <property type="entry name" value="SCF(TIR1) ubiquitin ligase complex, variant CUL1-RBX1A-ASK20"/>
</dbReference>
<dbReference type="ComplexPortal" id="CPX-1534">
    <property type="entry name" value="SCF(TIR1) ubiquitin ligase complex, variant CUL1-RBX1A-ASK21"/>
</dbReference>
<dbReference type="ComplexPortal" id="CPX-1557">
    <property type="entry name" value="SCF(TIR1) ubiquitin ligase complex, variant CUL2-RBX1A-SKP1A"/>
</dbReference>
<dbReference type="ComplexPortal" id="CPX-1558">
    <property type="entry name" value="SCF(TIR1) ubiquitin ligase complex, variant CUL2-RBX1A-SKP1B"/>
</dbReference>
<dbReference type="ComplexPortal" id="CPX-1559">
    <property type="entry name" value="SCF(TIR1) ubiquitin ligase complex, variant CUL2-RBX1A-ASK3"/>
</dbReference>
<dbReference type="ComplexPortal" id="CPX-1560">
    <property type="entry name" value="SCF(TIR1) ubiquitin ligase complex, variant CUL2-RBX1A-ASK4"/>
</dbReference>
<dbReference type="ComplexPortal" id="CPX-1561">
    <property type="entry name" value="SCF(TIR1) ubiquitin ligase complex, variant CUL2-RBX1A-ASK5"/>
</dbReference>
<dbReference type="ComplexPortal" id="CPX-1562">
    <property type="entry name" value="SCF(TIR1) ubiquitin ligase complex, variant CUL2-RBX1A-ASK6"/>
</dbReference>
<dbReference type="ComplexPortal" id="CPX-1563">
    <property type="entry name" value="SCF(TIR1) ubiquitin ligase complex, variant CUL2-RBX1A-ASK7"/>
</dbReference>
<dbReference type="ComplexPortal" id="CPX-1564">
    <property type="entry name" value="SCF(TIR1) ubiquitin ligase complex, variant CUL2-RBX1A-ASK8"/>
</dbReference>
<dbReference type="ComplexPortal" id="CPX-1565">
    <property type="entry name" value="SCF(TIR1) ubiquitin ligase complex, variant CUL2-RBX1A-ASK9"/>
</dbReference>
<dbReference type="ComplexPortal" id="CPX-1566">
    <property type="entry name" value="SCF(TIR1) ubiquitin ligase complex, variant CUL2-RBX1A-ASK10"/>
</dbReference>
<dbReference type="ComplexPortal" id="CPX-1567">
    <property type="entry name" value="SCF(TIR1) ubiquitin ligase complex, variant CUL2-RBX1A-ASK11"/>
</dbReference>
<dbReference type="ComplexPortal" id="CPX-1568">
    <property type="entry name" value="SCF(TIR1) ubiquitin ligase complex, variant CUL2-RBX1A-ASK12"/>
</dbReference>
<dbReference type="ComplexPortal" id="CPX-1569">
    <property type="entry name" value="SCF(TIR1) ubiquitin ligase complex, variant CUL2-RBX1A-ASK13"/>
</dbReference>
<dbReference type="ComplexPortal" id="CPX-1570">
    <property type="entry name" value="SCF(TIR1) ubiquitin ligase complex, variant CUL2-RBX1A-ASK14"/>
</dbReference>
<dbReference type="ComplexPortal" id="CPX-1571">
    <property type="entry name" value="SCF(TIR1) ubiquitin ligase complex, variant CUL2-RBX1A-ASK15"/>
</dbReference>
<dbReference type="ComplexPortal" id="CPX-1572">
    <property type="entry name" value="SCF(TIR1) ubiquitin ligase complex, variant CUL2-RBX1A-ASK16"/>
</dbReference>
<dbReference type="ComplexPortal" id="CPX-1573">
    <property type="entry name" value="SCF(TIR1) ubiquitin ligase complex, variant CUL2-RBX1A-ASK17"/>
</dbReference>
<dbReference type="ComplexPortal" id="CPX-1574">
    <property type="entry name" value="SCF(TIR1) ubiquitin ligase complex, variant CUL2-RBX1A-ASK18"/>
</dbReference>
<dbReference type="ComplexPortal" id="CPX-1575">
    <property type="entry name" value="SCF(TIR1) ubiquitin ligase complex, variant CUL2-RBX1A-ASK19"/>
</dbReference>
<dbReference type="ComplexPortal" id="CPX-1576">
    <property type="entry name" value="SCF(TIR1) ubiquitin ligase complex, variant CUL2-RBX1A-ASK20"/>
</dbReference>
<dbReference type="ComplexPortal" id="CPX-1577">
    <property type="entry name" value="SCF(TIR1) ubiquitin ligase complex, variant CUL2-RBX1A-ASK21"/>
</dbReference>
<dbReference type="FunCoup" id="Q940X7">
    <property type="interactions" value="4398"/>
</dbReference>
<dbReference type="IntAct" id="Q940X7">
    <property type="interactions" value="10"/>
</dbReference>
<dbReference type="STRING" id="3702.Q940X7"/>
<dbReference type="iPTMnet" id="Q940X7"/>
<dbReference type="EnsemblPlants" id="AT5G20570.1">
    <molecule id="Q940X7-1"/>
    <property type="protein sequence ID" value="AT5G20570.1"/>
    <property type="gene ID" value="AT5G20570"/>
</dbReference>
<dbReference type="GeneID" id="832179"/>
<dbReference type="Gramene" id="AT5G20570.1">
    <molecule id="Q940X7-1"/>
    <property type="protein sequence ID" value="AT5G20570.1"/>
    <property type="gene ID" value="AT5G20570"/>
</dbReference>
<dbReference type="KEGG" id="ath:AT5G20570"/>
<dbReference type="Araport" id="AT5G20570"/>
<dbReference type="TAIR" id="AT5G20570">
    <property type="gene designation" value="RBX1"/>
</dbReference>
<dbReference type="HOGENOM" id="CLU_115512_2_2_1"/>
<dbReference type="InParanoid" id="Q940X7"/>
<dbReference type="OMA" id="DTCVECQ"/>
<dbReference type="PhylomeDB" id="Q940X7"/>
<dbReference type="UniPathway" id="UPA00143"/>
<dbReference type="PRO" id="PR:Q940X7"/>
<dbReference type="Proteomes" id="UP000006548">
    <property type="component" value="Chromosome 5"/>
</dbReference>
<dbReference type="ExpressionAtlas" id="Q940X7">
    <property type="expression patterns" value="baseline and differential"/>
</dbReference>
<dbReference type="GO" id="GO:0005737">
    <property type="term" value="C:cytoplasm"/>
    <property type="evidence" value="ECO:0007669"/>
    <property type="project" value="UniProtKB-SubCell"/>
</dbReference>
<dbReference type="GO" id="GO:0005634">
    <property type="term" value="C:nucleus"/>
    <property type="evidence" value="ECO:0007669"/>
    <property type="project" value="UniProtKB-SubCell"/>
</dbReference>
<dbReference type="GO" id="GO:0019005">
    <property type="term" value="C:SCF ubiquitin ligase complex"/>
    <property type="evidence" value="ECO:0000314"/>
    <property type="project" value="ComplexPortal"/>
</dbReference>
<dbReference type="GO" id="GO:0008270">
    <property type="term" value="F:zinc ion binding"/>
    <property type="evidence" value="ECO:0007669"/>
    <property type="project" value="UniProtKB-KW"/>
</dbReference>
<dbReference type="GO" id="GO:0009734">
    <property type="term" value="P:auxin-activated signaling pathway"/>
    <property type="evidence" value="ECO:0000303"/>
    <property type="project" value="ComplexPortal"/>
</dbReference>
<dbReference type="GO" id="GO:0009867">
    <property type="term" value="P:jasmonic acid mediated signaling pathway"/>
    <property type="evidence" value="ECO:0000315"/>
    <property type="project" value="ComplexPortal"/>
</dbReference>
<dbReference type="GO" id="GO:0016567">
    <property type="term" value="P:protein ubiquitination"/>
    <property type="evidence" value="ECO:0007669"/>
    <property type="project" value="UniProtKB-UniPathway"/>
</dbReference>
<dbReference type="GO" id="GO:0009733">
    <property type="term" value="P:response to auxin"/>
    <property type="evidence" value="ECO:0000303"/>
    <property type="project" value="ComplexPortal"/>
</dbReference>
<dbReference type="GO" id="GO:0009753">
    <property type="term" value="P:response to jasmonic acid"/>
    <property type="evidence" value="ECO:0000315"/>
    <property type="project" value="ComplexPortal"/>
</dbReference>
<dbReference type="CDD" id="cd16485">
    <property type="entry name" value="mRING-H2-C3H2C2D_RBX1"/>
    <property type="match status" value="1"/>
</dbReference>
<dbReference type="FunFam" id="3.30.40.10:FF:000010">
    <property type="entry name" value="E3 ubiquitin-protein ligase RBX1"/>
    <property type="match status" value="1"/>
</dbReference>
<dbReference type="Gene3D" id="3.30.40.10">
    <property type="entry name" value="Zinc/RING finger domain, C3HC4 (zinc finger)"/>
    <property type="match status" value="1"/>
</dbReference>
<dbReference type="InterPro" id="IPR051031">
    <property type="entry name" value="RING-box_E3_Ubiquitin_Ligase"/>
</dbReference>
<dbReference type="InterPro" id="IPR001841">
    <property type="entry name" value="Znf_RING"/>
</dbReference>
<dbReference type="InterPro" id="IPR013083">
    <property type="entry name" value="Znf_RING/FYVE/PHD"/>
</dbReference>
<dbReference type="InterPro" id="IPR024766">
    <property type="entry name" value="Znf_RING_H2"/>
</dbReference>
<dbReference type="PANTHER" id="PTHR11210">
    <property type="entry name" value="RING BOX"/>
    <property type="match status" value="1"/>
</dbReference>
<dbReference type="Pfam" id="PF12678">
    <property type="entry name" value="zf-rbx1"/>
    <property type="match status" value="1"/>
</dbReference>
<dbReference type="SUPFAM" id="SSF57850">
    <property type="entry name" value="RING/U-box"/>
    <property type="match status" value="1"/>
</dbReference>
<dbReference type="PROSITE" id="PS50089">
    <property type="entry name" value="ZF_RING_2"/>
    <property type="match status" value="1"/>
</dbReference>
<gene>
    <name type="primary">RBX1A</name>
    <name type="synonym">ROC1</name>
    <name type="ordered locus">At5g20570</name>
    <name type="ORF">F7C8.160</name>
</gene>
<sequence>MATLDSDVTMIPAGEASSSVAASSSNKKAKRFEIKKWSAVALWAWDIVVDNCAICRNHIMDLCIECQANQASATSEECTVAWGVCNHAFHFHCISRWLKTRQVCPLDNSEWEFQKYGH</sequence>